<evidence type="ECO:0000255" key="1">
    <source>
        <dbReference type="HAMAP-Rule" id="MF_00008"/>
    </source>
</evidence>
<feature type="chain" id="PRO_0000140941" description="Thymidylate synthase">
    <location>
        <begin position="1"/>
        <end position="264"/>
    </location>
</feature>
<feature type="active site" description="Nucleophile" evidence="1">
    <location>
        <position position="146"/>
    </location>
</feature>
<feature type="binding site" description="in other chain" evidence="1">
    <location>
        <position position="21"/>
    </location>
    <ligand>
        <name>dUMP</name>
        <dbReference type="ChEBI" id="CHEBI:246422"/>
        <note>ligand shared between dimeric partners</note>
    </ligand>
</feature>
<feature type="binding site" evidence="1">
    <location>
        <begin position="126"/>
        <end position="127"/>
    </location>
    <ligand>
        <name>dUMP</name>
        <dbReference type="ChEBI" id="CHEBI:246422"/>
        <note>ligand shared between dimeric partners</note>
    </ligand>
</feature>
<feature type="binding site" description="in other chain" evidence="1">
    <location>
        <begin position="166"/>
        <end position="169"/>
    </location>
    <ligand>
        <name>dUMP</name>
        <dbReference type="ChEBI" id="CHEBI:246422"/>
        <note>ligand shared between dimeric partners</note>
    </ligand>
</feature>
<feature type="binding site" evidence="1">
    <location>
        <position position="169"/>
    </location>
    <ligand>
        <name>(6R)-5,10-methylene-5,6,7,8-tetrahydrofolate</name>
        <dbReference type="ChEBI" id="CHEBI:15636"/>
    </ligand>
</feature>
<feature type="binding site" description="in other chain" evidence="1">
    <location>
        <position position="177"/>
    </location>
    <ligand>
        <name>dUMP</name>
        <dbReference type="ChEBI" id="CHEBI:246422"/>
        <note>ligand shared between dimeric partners</note>
    </ligand>
</feature>
<feature type="binding site" description="in other chain" evidence="1">
    <location>
        <begin position="207"/>
        <end position="209"/>
    </location>
    <ligand>
        <name>dUMP</name>
        <dbReference type="ChEBI" id="CHEBI:246422"/>
        <note>ligand shared between dimeric partners</note>
    </ligand>
</feature>
<feature type="binding site" evidence="1">
    <location>
        <position position="263"/>
    </location>
    <ligand>
        <name>(6R)-5,10-methylene-5,6,7,8-tetrahydrofolate</name>
        <dbReference type="ChEBI" id="CHEBI:15636"/>
    </ligand>
</feature>
<reference key="1">
    <citation type="journal article" date="2002" name="DNA Res.">
        <title>Complete genomic sequence of nitrogen-fixing symbiotic bacterium Bradyrhizobium japonicum USDA110.</title>
        <authorList>
            <person name="Kaneko T."/>
            <person name="Nakamura Y."/>
            <person name="Sato S."/>
            <person name="Minamisawa K."/>
            <person name="Uchiumi T."/>
            <person name="Sasamoto S."/>
            <person name="Watanabe A."/>
            <person name="Idesawa K."/>
            <person name="Iriguchi M."/>
            <person name="Kawashima K."/>
            <person name="Kohara M."/>
            <person name="Matsumoto M."/>
            <person name="Shimpo S."/>
            <person name="Tsuruoka H."/>
            <person name="Wada T."/>
            <person name="Yamada M."/>
            <person name="Tabata S."/>
        </authorList>
    </citation>
    <scope>NUCLEOTIDE SEQUENCE [LARGE SCALE GENOMIC DNA]</scope>
    <source>
        <strain>JCM 10833 / BCRC 13528 / IAM 13628 / NBRC 14792 / USDA 110</strain>
    </source>
</reference>
<proteinExistence type="inferred from homology"/>
<accession>Q89G35</accession>
<organism>
    <name type="scientific">Bradyrhizobium diazoefficiens (strain JCM 10833 / BCRC 13528 / IAM 13628 / NBRC 14792 / USDA 110)</name>
    <dbReference type="NCBI Taxonomy" id="224911"/>
    <lineage>
        <taxon>Bacteria</taxon>
        <taxon>Pseudomonadati</taxon>
        <taxon>Pseudomonadota</taxon>
        <taxon>Alphaproteobacteria</taxon>
        <taxon>Hyphomicrobiales</taxon>
        <taxon>Nitrobacteraceae</taxon>
        <taxon>Bradyrhizobium</taxon>
    </lineage>
</organism>
<dbReference type="EC" id="2.1.1.45" evidence="1"/>
<dbReference type="EMBL" id="BA000040">
    <property type="protein sequence ID" value="BAC51777.1"/>
    <property type="molecule type" value="Genomic_DNA"/>
</dbReference>
<dbReference type="RefSeq" id="NP_773152.1">
    <property type="nucleotide sequence ID" value="NC_004463.1"/>
</dbReference>
<dbReference type="RefSeq" id="WP_011089252.1">
    <property type="nucleotide sequence ID" value="NC_004463.1"/>
</dbReference>
<dbReference type="SMR" id="Q89G35"/>
<dbReference type="FunCoup" id="Q89G35">
    <property type="interactions" value="503"/>
</dbReference>
<dbReference type="STRING" id="224911.AAV28_30120"/>
<dbReference type="EnsemblBacteria" id="BAC51777">
    <property type="protein sequence ID" value="BAC51777"/>
    <property type="gene ID" value="BAC51777"/>
</dbReference>
<dbReference type="GeneID" id="46493485"/>
<dbReference type="KEGG" id="bja:bll6512"/>
<dbReference type="PATRIC" id="fig|224911.44.peg.6513"/>
<dbReference type="eggNOG" id="COG0207">
    <property type="taxonomic scope" value="Bacteria"/>
</dbReference>
<dbReference type="HOGENOM" id="CLU_021669_0_0_5"/>
<dbReference type="InParanoid" id="Q89G35"/>
<dbReference type="OrthoDB" id="9774633at2"/>
<dbReference type="PhylomeDB" id="Q89G35"/>
<dbReference type="UniPathway" id="UPA00575"/>
<dbReference type="Proteomes" id="UP000002526">
    <property type="component" value="Chromosome"/>
</dbReference>
<dbReference type="GO" id="GO:0005829">
    <property type="term" value="C:cytosol"/>
    <property type="evidence" value="ECO:0000318"/>
    <property type="project" value="GO_Central"/>
</dbReference>
<dbReference type="GO" id="GO:0004799">
    <property type="term" value="F:thymidylate synthase activity"/>
    <property type="evidence" value="ECO:0000318"/>
    <property type="project" value="GO_Central"/>
</dbReference>
<dbReference type="GO" id="GO:0006231">
    <property type="term" value="P:dTMP biosynthetic process"/>
    <property type="evidence" value="ECO:0000318"/>
    <property type="project" value="GO_Central"/>
</dbReference>
<dbReference type="GO" id="GO:0006235">
    <property type="term" value="P:dTTP biosynthetic process"/>
    <property type="evidence" value="ECO:0007669"/>
    <property type="project" value="UniProtKB-UniRule"/>
</dbReference>
<dbReference type="GO" id="GO:0032259">
    <property type="term" value="P:methylation"/>
    <property type="evidence" value="ECO:0007669"/>
    <property type="project" value="UniProtKB-KW"/>
</dbReference>
<dbReference type="CDD" id="cd00351">
    <property type="entry name" value="TS_Pyrimidine_HMase"/>
    <property type="match status" value="1"/>
</dbReference>
<dbReference type="FunFam" id="3.30.572.10:FF:000001">
    <property type="entry name" value="Thymidylate synthase"/>
    <property type="match status" value="1"/>
</dbReference>
<dbReference type="Gene3D" id="3.30.572.10">
    <property type="entry name" value="Thymidylate synthase/dCMP hydroxymethylase domain"/>
    <property type="match status" value="1"/>
</dbReference>
<dbReference type="HAMAP" id="MF_00008">
    <property type="entry name" value="Thymidy_synth_bact"/>
    <property type="match status" value="1"/>
</dbReference>
<dbReference type="InterPro" id="IPR045097">
    <property type="entry name" value="Thymidate_synth/dCMP_Mease"/>
</dbReference>
<dbReference type="InterPro" id="IPR023451">
    <property type="entry name" value="Thymidate_synth/dCMP_Mease_dom"/>
</dbReference>
<dbReference type="InterPro" id="IPR036926">
    <property type="entry name" value="Thymidate_synth/dCMP_Mease_sf"/>
</dbReference>
<dbReference type="InterPro" id="IPR000398">
    <property type="entry name" value="Thymidylate_synthase"/>
</dbReference>
<dbReference type="InterPro" id="IPR020940">
    <property type="entry name" value="Thymidylate_synthase_AS"/>
</dbReference>
<dbReference type="NCBIfam" id="NF002497">
    <property type="entry name" value="PRK01827.1-3"/>
    <property type="match status" value="1"/>
</dbReference>
<dbReference type="NCBIfam" id="NF002499">
    <property type="entry name" value="PRK01827.1-5"/>
    <property type="match status" value="1"/>
</dbReference>
<dbReference type="NCBIfam" id="TIGR03284">
    <property type="entry name" value="thym_sym"/>
    <property type="match status" value="2"/>
</dbReference>
<dbReference type="PANTHER" id="PTHR11548:SF9">
    <property type="entry name" value="THYMIDYLATE SYNTHASE"/>
    <property type="match status" value="1"/>
</dbReference>
<dbReference type="PANTHER" id="PTHR11548">
    <property type="entry name" value="THYMIDYLATE SYNTHASE 1"/>
    <property type="match status" value="1"/>
</dbReference>
<dbReference type="Pfam" id="PF00303">
    <property type="entry name" value="Thymidylat_synt"/>
    <property type="match status" value="1"/>
</dbReference>
<dbReference type="PRINTS" id="PR00108">
    <property type="entry name" value="THYMDSNTHASE"/>
</dbReference>
<dbReference type="SUPFAM" id="SSF55831">
    <property type="entry name" value="Thymidylate synthase/dCMP hydroxymethylase"/>
    <property type="match status" value="1"/>
</dbReference>
<dbReference type="PROSITE" id="PS00091">
    <property type="entry name" value="THYMIDYLATE_SYNTHASE"/>
    <property type="match status" value="1"/>
</dbReference>
<protein>
    <recommendedName>
        <fullName evidence="1">Thymidylate synthase</fullName>
        <shortName evidence="1">TS</shortName>
        <shortName evidence="1">TSase</shortName>
        <ecNumber evidence="1">2.1.1.45</ecNumber>
    </recommendedName>
</protein>
<name>TYSY_BRADU</name>
<comment type="function">
    <text evidence="1">Catalyzes the reductive methylation of 2'-deoxyuridine-5'-monophosphate (dUMP) to 2'-deoxythymidine-5'-monophosphate (dTMP) while utilizing 5,10-methylenetetrahydrofolate (mTHF) as the methyl donor and reductant in the reaction, yielding dihydrofolate (DHF) as a by-product. This enzymatic reaction provides an intracellular de novo source of dTMP, an essential precursor for DNA biosynthesis.</text>
</comment>
<comment type="catalytic activity">
    <reaction evidence="1">
        <text>dUMP + (6R)-5,10-methylene-5,6,7,8-tetrahydrofolate = 7,8-dihydrofolate + dTMP</text>
        <dbReference type="Rhea" id="RHEA:12104"/>
        <dbReference type="ChEBI" id="CHEBI:15636"/>
        <dbReference type="ChEBI" id="CHEBI:57451"/>
        <dbReference type="ChEBI" id="CHEBI:63528"/>
        <dbReference type="ChEBI" id="CHEBI:246422"/>
        <dbReference type="EC" id="2.1.1.45"/>
    </reaction>
</comment>
<comment type="pathway">
    <text evidence="1">Pyrimidine metabolism; dTTP biosynthesis.</text>
</comment>
<comment type="subunit">
    <text evidence="1">Homodimer.</text>
</comment>
<comment type="subcellular location">
    <subcellularLocation>
        <location evidence="1">Cytoplasm</location>
    </subcellularLocation>
</comment>
<comment type="similarity">
    <text evidence="1">Belongs to the thymidylate synthase family. Bacterial-type ThyA subfamily.</text>
</comment>
<keyword id="KW-0963">Cytoplasm</keyword>
<keyword id="KW-0489">Methyltransferase</keyword>
<keyword id="KW-0545">Nucleotide biosynthesis</keyword>
<keyword id="KW-1185">Reference proteome</keyword>
<keyword id="KW-0808">Transferase</keyword>
<sequence length="264" mass="29941">MHQYQDLLERILSDGAEKTDRTGTGTLSVFGHQMRFNLSAGFPMLTTKRLPLKAIVHELLWFLKGDTNIKYLRDNGVTIWDEWADANGDLGPVYGHQWRSWPAPDGRSIDQIANVVDMIKRNPDSRRLIVSAWNPAEVDKMALPPCHCLFQFYVANGKLSCQLYQRSADVFLGVPFNIASYALLTMMVAQVTGLKPGDFVHSFGDTHLYSNHLEQAKLQLTRAPRALPVMRINPDVKDIFSFRFEDFELVGYDPHPHIKAEVAV</sequence>
<gene>
    <name evidence="1" type="primary">thyA</name>
    <name type="ordered locus">bll6512</name>
</gene>